<accession>Q6MG53</accession>
<feature type="signal peptide" evidence="2">
    <location>
        <begin position="1"/>
        <end position="18"/>
    </location>
</feature>
<feature type="chain" id="PRO_0000318604" description="Lymphocyte antigen 6 complex locus protein G5b">
    <location>
        <begin position="19"/>
        <end position="194"/>
    </location>
</feature>
<feature type="domain" description="UPAR/Ly6">
    <location>
        <begin position="26"/>
        <end position="118"/>
    </location>
</feature>
<feature type="glycosylation site" description="N-linked (GlcNAc...) asparagine" evidence="2">
    <location>
        <position position="182"/>
    </location>
</feature>
<feature type="disulfide bond" evidence="1">
    <location>
        <begin position="28"/>
        <end position="55"/>
    </location>
</feature>
<feature type="disulfide bond" evidence="1">
    <location>
        <begin position="31"/>
        <end position="40"/>
    </location>
</feature>
<feature type="disulfide bond" evidence="1">
    <location>
        <begin position="47"/>
        <end position="73"/>
    </location>
</feature>
<feature type="disulfide bond" evidence="1">
    <location>
        <begin position="81"/>
        <end position="98"/>
    </location>
</feature>
<feature type="disulfide bond" evidence="1">
    <location>
        <begin position="99"/>
        <end position="104"/>
    </location>
</feature>
<gene>
    <name type="primary">Ly6g5b</name>
</gene>
<evidence type="ECO:0000250" key="1"/>
<evidence type="ECO:0000255" key="2"/>
<evidence type="ECO:0000305" key="3"/>
<sequence length="194" mass="21588">MRACVLVHVLTMVGFALGKAPVASVRTCHLCFLEDPSIGCISGSEKCTISSSSPCMVITIYQNVKVRFHVRGCGQHHSFRCQENHVIYYSDYWYRVNCCQYDYCNSWSSAQHQSTLPGPPGNHLGVPLSESQIKQFYQALHLPLFQPDLHTHKVSEGPDSLILPPGLGLSIADLRKIYLFLNSSGLLVLPQARP</sequence>
<keyword id="KW-1015">Disulfide bond</keyword>
<keyword id="KW-0325">Glycoprotein</keyword>
<keyword id="KW-1185">Reference proteome</keyword>
<keyword id="KW-0964">Secreted</keyword>
<keyword id="KW-0732">Signal</keyword>
<name>LY65B_RAT</name>
<comment type="subcellular location">
    <subcellularLocation>
        <location evidence="3">Secreted</location>
    </subcellularLocation>
</comment>
<comment type="PTM">
    <text evidence="1">N-glycosylated.</text>
</comment>
<dbReference type="EMBL" id="BX883045">
    <property type="protein sequence ID" value="CAE83993.1"/>
    <property type="molecule type" value="Genomic_DNA"/>
</dbReference>
<dbReference type="RefSeq" id="NP_001001934.1">
    <property type="nucleotide sequence ID" value="NM_001001934.2"/>
</dbReference>
<dbReference type="FunCoup" id="Q6MG53">
    <property type="interactions" value="3"/>
</dbReference>
<dbReference type="STRING" id="10116.ENSRNOP00000032293"/>
<dbReference type="GlyCosmos" id="Q6MG53">
    <property type="glycosylation" value="1 site, No reported glycans"/>
</dbReference>
<dbReference type="GlyGen" id="Q6MG53">
    <property type="glycosylation" value="1 site"/>
</dbReference>
<dbReference type="PhosphoSitePlus" id="Q6MG53"/>
<dbReference type="PaxDb" id="10116-ENSRNOP00000032293"/>
<dbReference type="Ensembl" id="ENSRNOT00000038130.4">
    <property type="protein sequence ID" value="ENSRNOP00000032293.1"/>
    <property type="gene ID" value="ENSRNOG00000027516.4"/>
</dbReference>
<dbReference type="GeneID" id="406867"/>
<dbReference type="KEGG" id="rno:406867"/>
<dbReference type="UCSC" id="RGD:1303101">
    <property type="organism name" value="rat"/>
</dbReference>
<dbReference type="AGR" id="RGD:1303101"/>
<dbReference type="CTD" id="58496"/>
<dbReference type="RGD" id="1303101">
    <property type="gene designation" value="Ly6g5b"/>
</dbReference>
<dbReference type="eggNOG" id="ENOG502SXN1">
    <property type="taxonomic scope" value="Eukaryota"/>
</dbReference>
<dbReference type="GeneTree" id="ENSGT00520000060793"/>
<dbReference type="HOGENOM" id="CLU_120540_0_0_1"/>
<dbReference type="InParanoid" id="Q6MG53"/>
<dbReference type="OMA" id="CMVISIY"/>
<dbReference type="OrthoDB" id="2849at9989"/>
<dbReference type="PhylomeDB" id="Q6MG53"/>
<dbReference type="TreeFam" id="TF338717"/>
<dbReference type="PRO" id="PR:Q6MG53"/>
<dbReference type="Proteomes" id="UP000002494">
    <property type="component" value="Chromosome 20"/>
</dbReference>
<dbReference type="Bgee" id="ENSRNOG00000027516">
    <property type="expression patterns" value="Expressed in cerebellum and 15 other cell types or tissues"/>
</dbReference>
<dbReference type="ExpressionAtlas" id="Q6MG53">
    <property type="expression patterns" value="baseline"/>
</dbReference>
<dbReference type="GO" id="GO:0009897">
    <property type="term" value="C:external side of plasma membrane"/>
    <property type="evidence" value="ECO:0000266"/>
    <property type="project" value="RGD"/>
</dbReference>
<dbReference type="GO" id="GO:0005576">
    <property type="term" value="C:extracellular region"/>
    <property type="evidence" value="ECO:0007669"/>
    <property type="project" value="UniProtKB-SubCell"/>
</dbReference>
<dbReference type="GO" id="GO:0032991">
    <property type="term" value="C:protein-containing complex"/>
    <property type="evidence" value="ECO:0000266"/>
    <property type="project" value="RGD"/>
</dbReference>
<dbReference type="GO" id="GO:0042802">
    <property type="term" value="F:identical protein binding"/>
    <property type="evidence" value="ECO:0000266"/>
    <property type="project" value="RGD"/>
</dbReference>
<dbReference type="CDD" id="cd23544">
    <property type="entry name" value="TFP_LU_ECD_Ly6G5b"/>
    <property type="match status" value="1"/>
</dbReference>
<dbReference type="InterPro" id="IPR016054">
    <property type="entry name" value="LY6_UPA_recep-like"/>
</dbReference>
<dbReference type="InterPro" id="IPR038773">
    <property type="entry name" value="LY6G5B"/>
</dbReference>
<dbReference type="PANTHER" id="PTHR14313">
    <property type="entry name" value="LYMPHOCYTE ANTIGEN 6 COMPLEX LOCUS PROTEIN G5B"/>
    <property type="match status" value="1"/>
</dbReference>
<dbReference type="PANTHER" id="PTHR14313:SF2">
    <property type="entry name" value="LYMPHOCYTE ANTIGEN 6 COMPLEX LOCUS PROTEIN G5B"/>
    <property type="match status" value="1"/>
</dbReference>
<dbReference type="Pfam" id="PF00021">
    <property type="entry name" value="UPAR_LY6"/>
    <property type="match status" value="1"/>
</dbReference>
<organism>
    <name type="scientific">Rattus norvegicus</name>
    <name type="common">Rat</name>
    <dbReference type="NCBI Taxonomy" id="10116"/>
    <lineage>
        <taxon>Eukaryota</taxon>
        <taxon>Metazoa</taxon>
        <taxon>Chordata</taxon>
        <taxon>Craniata</taxon>
        <taxon>Vertebrata</taxon>
        <taxon>Euteleostomi</taxon>
        <taxon>Mammalia</taxon>
        <taxon>Eutheria</taxon>
        <taxon>Euarchontoglires</taxon>
        <taxon>Glires</taxon>
        <taxon>Rodentia</taxon>
        <taxon>Myomorpha</taxon>
        <taxon>Muroidea</taxon>
        <taxon>Muridae</taxon>
        <taxon>Murinae</taxon>
        <taxon>Rattus</taxon>
    </lineage>
</organism>
<reference key="1">
    <citation type="journal article" date="2004" name="Genome Res.">
        <title>The genomic sequence and comparative analysis of the rat major histocompatibility complex.</title>
        <authorList>
            <person name="Hurt P."/>
            <person name="Walter L."/>
            <person name="Sudbrak R."/>
            <person name="Klages S."/>
            <person name="Mueller I."/>
            <person name="Shiina T."/>
            <person name="Inoko H."/>
            <person name="Lehrach H."/>
            <person name="Guenther E."/>
            <person name="Reinhardt R."/>
            <person name="Himmelbauer H."/>
        </authorList>
    </citation>
    <scope>NUCLEOTIDE SEQUENCE [LARGE SCALE GENOMIC DNA]</scope>
    <source>
        <strain>Brown Norway</strain>
    </source>
</reference>
<protein>
    <recommendedName>
        <fullName>Lymphocyte antigen 6 complex locus protein G5b</fullName>
    </recommendedName>
</protein>
<proteinExistence type="inferred from homology"/>